<keyword id="KW-0150">Chloroplast</keyword>
<keyword id="KW-0342">GTP-binding</keyword>
<keyword id="KW-0436">Ligase</keyword>
<keyword id="KW-0460">Magnesium</keyword>
<keyword id="KW-0479">Metal-binding</keyword>
<keyword id="KW-0547">Nucleotide-binding</keyword>
<keyword id="KW-0934">Plastid</keyword>
<keyword id="KW-0658">Purine biosynthesis</keyword>
<keyword id="KW-0809">Transit peptide</keyword>
<organism>
    <name type="scientific">Capsicum frutescens</name>
    <name type="common">Cayenne pepper</name>
    <name type="synonym">Tabasco pepper</name>
    <dbReference type="NCBI Taxonomy" id="4073"/>
    <lineage>
        <taxon>Eukaryota</taxon>
        <taxon>Viridiplantae</taxon>
        <taxon>Streptophyta</taxon>
        <taxon>Embryophyta</taxon>
        <taxon>Tracheophyta</taxon>
        <taxon>Spermatophyta</taxon>
        <taxon>Magnoliopsida</taxon>
        <taxon>eudicotyledons</taxon>
        <taxon>Gunneridae</taxon>
        <taxon>Pentapetalae</taxon>
        <taxon>asterids</taxon>
        <taxon>lamiids</taxon>
        <taxon>Solanales</taxon>
        <taxon>Solanaceae</taxon>
        <taxon>Solanoideae</taxon>
        <taxon>Capsiceae</taxon>
        <taxon>Capsicum</taxon>
    </lineage>
</organism>
<gene>
    <name evidence="2" type="primary">PURA1</name>
    <name type="ORF">7.PEPPER.5</name>
</gene>
<evidence type="ECO:0000250" key="1"/>
<evidence type="ECO:0000255" key="2">
    <source>
        <dbReference type="HAMAP-Rule" id="MF_03125"/>
    </source>
</evidence>
<dbReference type="EC" id="6.3.4.4" evidence="2"/>
<dbReference type="EMBL" id="EF517792">
    <property type="protein sequence ID" value="ABU45185.1"/>
    <property type="molecule type" value="Genomic_DNA"/>
</dbReference>
<dbReference type="SMR" id="A9XLE1"/>
<dbReference type="UniPathway" id="UPA00075">
    <property type="reaction ID" value="UER00335"/>
</dbReference>
<dbReference type="GO" id="GO:0009507">
    <property type="term" value="C:chloroplast"/>
    <property type="evidence" value="ECO:0007669"/>
    <property type="project" value="UniProtKB-SubCell"/>
</dbReference>
<dbReference type="GO" id="GO:0004019">
    <property type="term" value="F:adenylosuccinate synthase activity"/>
    <property type="evidence" value="ECO:0007669"/>
    <property type="project" value="UniProtKB-UniRule"/>
</dbReference>
<dbReference type="GO" id="GO:0005525">
    <property type="term" value="F:GTP binding"/>
    <property type="evidence" value="ECO:0007669"/>
    <property type="project" value="UniProtKB-UniRule"/>
</dbReference>
<dbReference type="GO" id="GO:0000287">
    <property type="term" value="F:magnesium ion binding"/>
    <property type="evidence" value="ECO:0007669"/>
    <property type="project" value="UniProtKB-UniRule"/>
</dbReference>
<dbReference type="GO" id="GO:0044208">
    <property type="term" value="P:'de novo' AMP biosynthetic process"/>
    <property type="evidence" value="ECO:0007669"/>
    <property type="project" value="UniProtKB-UniRule"/>
</dbReference>
<dbReference type="GO" id="GO:0046040">
    <property type="term" value="P:IMP metabolic process"/>
    <property type="evidence" value="ECO:0007669"/>
    <property type="project" value="TreeGrafter"/>
</dbReference>
<dbReference type="CDD" id="cd03108">
    <property type="entry name" value="AdSS"/>
    <property type="match status" value="1"/>
</dbReference>
<dbReference type="FunFam" id="3.90.170.10:FF:000001">
    <property type="entry name" value="Adenylosuccinate synthetase"/>
    <property type="match status" value="1"/>
</dbReference>
<dbReference type="FunFam" id="1.10.300.10:FF:000002">
    <property type="entry name" value="Adenylosuccinate synthetase, chloroplastic"/>
    <property type="match status" value="1"/>
</dbReference>
<dbReference type="Gene3D" id="3.40.440.10">
    <property type="entry name" value="Adenylosuccinate Synthetase, subunit A, domain 1"/>
    <property type="match status" value="1"/>
</dbReference>
<dbReference type="Gene3D" id="1.10.300.10">
    <property type="entry name" value="Adenylosuccinate Synthetase, subunit A, domain 2"/>
    <property type="match status" value="1"/>
</dbReference>
<dbReference type="Gene3D" id="3.90.170.10">
    <property type="entry name" value="Adenylosuccinate Synthetase, subunit A, domain 3"/>
    <property type="match status" value="1"/>
</dbReference>
<dbReference type="HAMAP" id="MF_00011">
    <property type="entry name" value="Adenylosucc_synth"/>
    <property type="match status" value="1"/>
</dbReference>
<dbReference type="InterPro" id="IPR018220">
    <property type="entry name" value="Adenylosuccin_syn_GTP-bd"/>
</dbReference>
<dbReference type="InterPro" id="IPR033128">
    <property type="entry name" value="Adenylosuccin_syn_Lys_AS"/>
</dbReference>
<dbReference type="InterPro" id="IPR042109">
    <property type="entry name" value="Adenylosuccinate_synth_dom1"/>
</dbReference>
<dbReference type="InterPro" id="IPR042110">
    <property type="entry name" value="Adenylosuccinate_synth_dom2"/>
</dbReference>
<dbReference type="InterPro" id="IPR042111">
    <property type="entry name" value="Adenylosuccinate_synth_dom3"/>
</dbReference>
<dbReference type="InterPro" id="IPR001114">
    <property type="entry name" value="Adenylosuccinate_synthetase"/>
</dbReference>
<dbReference type="InterPro" id="IPR027417">
    <property type="entry name" value="P-loop_NTPase"/>
</dbReference>
<dbReference type="NCBIfam" id="NF002223">
    <property type="entry name" value="PRK01117.1"/>
    <property type="match status" value="1"/>
</dbReference>
<dbReference type="NCBIfam" id="TIGR00184">
    <property type="entry name" value="purA"/>
    <property type="match status" value="1"/>
</dbReference>
<dbReference type="PANTHER" id="PTHR11846">
    <property type="entry name" value="ADENYLOSUCCINATE SYNTHETASE"/>
    <property type="match status" value="1"/>
</dbReference>
<dbReference type="PANTHER" id="PTHR11846:SF18">
    <property type="entry name" value="ADENYLOSUCCINATE SYNTHETASE, CHLOROPLASTIC"/>
    <property type="match status" value="1"/>
</dbReference>
<dbReference type="Pfam" id="PF00709">
    <property type="entry name" value="Adenylsucc_synt"/>
    <property type="match status" value="1"/>
</dbReference>
<dbReference type="SMART" id="SM00788">
    <property type="entry name" value="Adenylsucc_synt"/>
    <property type="match status" value="1"/>
</dbReference>
<dbReference type="SUPFAM" id="SSF52540">
    <property type="entry name" value="P-loop containing nucleoside triphosphate hydrolases"/>
    <property type="match status" value="1"/>
</dbReference>
<dbReference type="PROSITE" id="PS01266">
    <property type="entry name" value="ADENYLOSUCCIN_SYN_1"/>
    <property type="match status" value="1"/>
</dbReference>
<dbReference type="PROSITE" id="PS00513">
    <property type="entry name" value="ADENYLOSUCCIN_SYN_2"/>
    <property type="match status" value="1"/>
</dbReference>
<feature type="transit peptide" description="Chloroplast" evidence="2">
    <location>
        <begin position="1"/>
        <end position="56"/>
    </location>
</feature>
<feature type="chain" id="PRO_0000399272" description="Adenylosuccinate synthetase 1, chloroplastic">
    <location>
        <begin position="57"/>
        <end position="508"/>
    </location>
</feature>
<feature type="active site" description="Proton acceptor" evidence="2">
    <location>
        <position position="96"/>
    </location>
</feature>
<feature type="active site" description="Proton donor" evidence="2">
    <location>
        <position position="124"/>
    </location>
</feature>
<feature type="binding site" evidence="2">
    <location>
        <begin position="95"/>
        <end position="101"/>
    </location>
    <ligand>
        <name>GTP</name>
        <dbReference type="ChEBI" id="CHEBI:37565"/>
    </ligand>
</feature>
<feature type="binding site" description="in other chain" evidence="2">
    <location>
        <begin position="96"/>
        <end position="99"/>
    </location>
    <ligand>
        <name>IMP</name>
        <dbReference type="ChEBI" id="CHEBI:58053"/>
        <note>ligand shared between dimeric partners</note>
    </ligand>
</feature>
<feature type="binding site" evidence="2">
    <location>
        <position position="96"/>
    </location>
    <ligand>
        <name>Mg(2+)</name>
        <dbReference type="ChEBI" id="CHEBI:18420"/>
    </ligand>
</feature>
<feature type="binding site" description="in other chain" evidence="2">
    <location>
        <begin position="121"/>
        <end position="124"/>
    </location>
    <ligand>
        <name>IMP</name>
        <dbReference type="ChEBI" id="CHEBI:58053"/>
        <note>ligand shared between dimeric partners</note>
    </ligand>
</feature>
<feature type="binding site" evidence="2">
    <location>
        <begin position="123"/>
        <end position="125"/>
    </location>
    <ligand>
        <name>GTP</name>
        <dbReference type="ChEBI" id="CHEBI:37565"/>
    </ligand>
</feature>
<feature type="binding site" evidence="2">
    <location>
        <position position="123"/>
    </location>
    <ligand>
        <name>Mg(2+)</name>
        <dbReference type="ChEBI" id="CHEBI:18420"/>
    </ligand>
</feature>
<feature type="binding site" description="in other chain" evidence="2">
    <location>
        <position position="213"/>
    </location>
    <ligand>
        <name>IMP</name>
        <dbReference type="ChEBI" id="CHEBI:58053"/>
        <note>ligand shared between dimeric partners</note>
    </ligand>
</feature>
<feature type="binding site" evidence="2">
    <location>
        <position position="227"/>
    </location>
    <ligand>
        <name>IMP</name>
        <dbReference type="ChEBI" id="CHEBI:58053"/>
        <note>ligand shared between dimeric partners</note>
    </ligand>
</feature>
<feature type="binding site" description="in other chain" evidence="2">
    <location>
        <position position="307"/>
    </location>
    <ligand>
        <name>IMP</name>
        <dbReference type="ChEBI" id="CHEBI:58053"/>
        <note>ligand shared between dimeric partners</note>
    </ligand>
</feature>
<feature type="binding site" description="in other chain" evidence="2">
    <location>
        <position position="322"/>
    </location>
    <ligand>
        <name>IMP</name>
        <dbReference type="ChEBI" id="CHEBI:58053"/>
        <note>ligand shared between dimeric partners</note>
    </ligand>
</feature>
<feature type="binding site" evidence="2">
    <location>
        <begin position="382"/>
        <end position="388"/>
    </location>
    <ligand>
        <name>substrate</name>
    </ligand>
</feature>
<feature type="binding site" description="in other chain" evidence="2">
    <location>
        <position position="386"/>
    </location>
    <ligand>
        <name>IMP</name>
        <dbReference type="ChEBI" id="CHEBI:58053"/>
        <note>ligand shared between dimeric partners</note>
    </ligand>
</feature>
<feature type="binding site" evidence="2">
    <location>
        <position position="388"/>
    </location>
    <ligand>
        <name>GTP</name>
        <dbReference type="ChEBI" id="CHEBI:37565"/>
    </ligand>
</feature>
<feature type="binding site" evidence="2">
    <location>
        <begin position="414"/>
        <end position="416"/>
    </location>
    <ligand>
        <name>GTP</name>
        <dbReference type="ChEBI" id="CHEBI:37565"/>
    </ligand>
</feature>
<feature type="binding site" evidence="2">
    <location>
        <begin position="497"/>
        <end position="499"/>
    </location>
    <ligand>
        <name>GTP</name>
        <dbReference type="ChEBI" id="CHEBI:37565"/>
    </ligand>
</feature>
<comment type="function">
    <text evidence="1">Plays an important role in the de novo pathway and in the salvage pathway of purine nucleotide biosynthesis. Catalyzes the first committed step in the biosynthesis of AMP from IMP (By similarity).</text>
</comment>
<comment type="catalytic activity">
    <reaction evidence="2">
        <text>IMP + L-aspartate + GTP = N(6)-(1,2-dicarboxyethyl)-AMP + GDP + phosphate + 2 H(+)</text>
        <dbReference type="Rhea" id="RHEA:15753"/>
        <dbReference type="ChEBI" id="CHEBI:15378"/>
        <dbReference type="ChEBI" id="CHEBI:29991"/>
        <dbReference type="ChEBI" id="CHEBI:37565"/>
        <dbReference type="ChEBI" id="CHEBI:43474"/>
        <dbReference type="ChEBI" id="CHEBI:57567"/>
        <dbReference type="ChEBI" id="CHEBI:58053"/>
        <dbReference type="ChEBI" id="CHEBI:58189"/>
        <dbReference type="EC" id="6.3.4.4"/>
    </reaction>
</comment>
<comment type="cofactor">
    <cofactor evidence="2">
        <name>Mg(2+)</name>
        <dbReference type="ChEBI" id="CHEBI:18420"/>
    </cofactor>
    <text evidence="2">Binds 1 Mg(2+) ion per subunit.</text>
</comment>
<comment type="pathway">
    <text evidence="2">Purine metabolism; AMP biosynthesis via de novo pathway; AMP from IMP: step 1/2.</text>
</comment>
<comment type="subunit">
    <text evidence="2">Homodimer.</text>
</comment>
<comment type="subcellular location">
    <subcellularLocation>
        <location evidence="2">Plastid</location>
        <location evidence="2">Chloroplast</location>
    </subcellularLocation>
</comment>
<comment type="similarity">
    <text evidence="2">Belongs to the adenylosuccinate synthetase family.</text>
</comment>
<name>PURA1_CAPFR</name>
<proteinExistence type="inferred from homology"/>
<reference key="1">
    <citation type="journal article" date="2008" name="Genetics">
        <title>Sequencing and comparative analysis of a conserved syntenic segment in the solanaceae.</title>
        <authorList>
            <person name="Wang Y."/>
            <person name="Diehl A."/>
            <person name="Wu F."/>
            <person name="Vrebalov J."/>
            <person name="Giovannoni J."/>
            <person name="Siepel A."/>
            <person name="Tanksley S.D."/>
        </authorList>
    </citation>
    <scope>NUCLEOTIDE SEQUENCE [GENOMIC DNA]</scope>
</reference>
<accession>A9XLE1</accession>
<sequence length="508" mass="55540">MNISILRLDSNPITTATSPATATANHRSGILGCYNGTYSCRLNQLQQRKKNPSIIVCSTTKPLASVVDRHGVSESGLSRIESLSQVSGVLGCQWGDEGKGKLVDILAKHFDIVARCQGGANAGHTIYNSEGKKFALHLVPSGILNEETVCVIGNGVVVHLPGLFKEIDGLESNGVSCQGRILVSDRAHLLFDFHQEIDGLREAELAKSFIGTTKRGIGPCYSSKVIRNGIRVSDLRHMDTFPQKLDRLLSDAAARFPGFKYGPEMLREEVERYKKFAERLEPFITDTVHFMNDAISQKKKILVEGGQATMLDIDFGTYPFVTSSSPSAGGICTGLGIAPRVVGDLVGVVKAYTTRVGSGPFPTEIMGKGGDLLRFAGQEFGTTTGRPRRCGWLDIVALRYCCQINGFASLNLTKLDVLSDLSEIQLGVTYRHPDGSILNSFPSDLRLLEQLKVEYEVLRGWQSDISSIRKYSDLPKSAREYVERIEELVGVPIHYIGIGPGRDALIYK</sequence>
<protein>
    <recommendedName>
        <fullName evidence="2">Adenylosuccinate synthetase 1, chloroplastic</fullName>
        <shortName evidence="2">AMPSase 1</shortName>
        <shortName evidence="2">AdSS 1</shortName>
        <ecNumber evidence="2">6.3.4.4</ecNumber>
    </recommendedName>
    <alternativeName>
        <fullName evidence="2">IMP--aspartate ligase 1</fullName>
    </alternativeName>
</protein>